<sequence>MAAEREPPPLGDGKPTDFEDLEDGEDLFTSTVSTLESSPSSPEPASLPAEDISANSNGPKPTEVVLDDDREDLFAEATEEVSLDSPEREPILSSEPSPAVTPVTPTTLIAPRIESKSMSAPVIFDRSREEIEEEANGDIFDIEIGVSDPEKVGDGMNAYMAYRVTTKTSLSMFSKSEFSVKRRFSDFLGLHSKLASKYLHVGYIVPPAPEKSIVGMTKVKVGKEDSSSTEFVEKRRAALERYLQRTVKHPTLLQDPDLRQFLESSELPRAVNTQALSGAGILRMVNKAADAVNKMTIKMNESDAWFEEKQQQFENLDQQLRKLHVSVEALVCHRKELSANTAAFAKSAAMLGNSEDHTALSRALSQLAEVEEKIDQLHQEQAFADFYMFSELLSDYIRLIAAVKGVFDHRMKCWQKWEDAQITLLKKREAEAKMMVANKPDKIQQAKNEIREWEAKVQQGERDFEQISKTIRKEVGRFEKERVKDFKTVIIKYLESLVQTQQQLIKYWEAFLPEAKAIA</sequence>
<proteinExistence type="evidence at protein level"/>
<keyword id="KW-0007">Acetylation</keyword>
<keyword id="KW-0025">Alternative splicing</keyword>
<keyword id="KW-0966">Cell projection</keyword>
<keyword id="KW-0967">Endosome</keyword>
<keyword id="KW-0446">Lipid-binding</keyword>
<keyword id="KW-0472">Membrane</keyword>
<keyword id="KW-0597">Phosphoprotein</keyword>
<keyword id="KW-0653">Protein transport</keyword>
<keyword id="KW-1267">Proteomics identification</keyword>
<keyword id="KW-1185">Reference proteome</keyword>
<keyword id="KW-0813">Transport</keyword>
<comment type="function">
    <text evidence="8 9 13 14 15 18">Involved in several stages of intracellular trafficking. Interacts with membranes containing phosphatidylinositol 3-phosphate (PtdIns(3P)) or phosphatidylinositol 3,5-bisphosphate (PtdIns(3,5)P2) (PubMed:16179610). Acts in part as component of the retromer membrane-deforming SNX-BAR subcomplex (PubMed:17101778). The SNX-BAR retromer mediates retrograde transport of cargo proteins from endosomes to the trans-Golgi network (TGN) and is involved in endosome-to-plasma membrane transport for cargo protein recycling. The SNX-BAR subcomplex functions to deform the donor membrane into a tubular profile called endosome-to-TGN transport carrier (ETC) (Probable). Can sense membrane curvature and has in vitro vesicle-to-membrane remodeling activity (PubMed:23085988). Required for retrograde endosome-to-TGN transport of TGN38 (PubMed:20138391). Promotes KALRN- and RHOG-dependent but retromer-independent membrane remodeling such as lamellipodium formation; the function is dependent on GEF activity of KALRN (PubMed:20604901).</text>
</comment>
<comment type="subunit">
    <text evidence="6 7 9 11 12 14 15 16 19 22">Predominantly forms heterodimers with BAR domain-containing sorting nexins SNX5, SNX6 and SNX32; can self-associate to form homodimers (PubMed:23085988). The heterodimers are proposed to self-assemble into helical arrays on the membrane to stabilize and expand local membrane curvature underlying endosomal tubule formation. Thought to be a component of the originally described retromer complex (also called SNX-BAR retromer) which is a pentamer containing the heterotrimeric retromer cargo-selective complex (CSC), also described as vacuolar protein sorting subcomplex (VPS), and a heterodimeric membrane-deforming subcomplex formed between SNX1 or SNX2 and SNX5 or SNX6 (also called SNX-BAR subcomplex); the respective CSC and SNX-BAR subcomplexes associate with low affinity (Probable). Interacts with SNX5, SNX6, SNX32, VPS26A, VPS29, VPS35, FNBP1, KALRN, RHOG (GDP-bound form) (PubMed:11438682, PubMed:14596906, PubMed:17101778, PubMed:19619496, PubMed:19935774, PubMed:20604901, PubMed:23085988).</text>
</comment>
<comment type="interaction">
    <interactant intactId="EBI-1046690">
        <id>O60749</id>
    </interactant>
    <interactant intactId="EBI-77613">
        <id>P05067</id>
        <label>APP</label>
    </interactant>
    <organismsDiffer>false</organismsDiffer>
    <experiments>3</experiments>
</comment>
<comment type="interaction">
    <interactant intactId="EBI-1046690">
        <id>O60749</id>
    </interactant>
    <interactant intactId="EBI-714543">
        <id>Q15041</id>
        <label>ARL6IP1</label>
    </interactant>
    <organismsDiffer>false</organismsDiffer>
    <experiments>3</experiments>
</comment>
<comment type="interaction">
    <interactant intactId="EBI-1046690">
        <id>O60749</id>
    </interactant>
    <interactant intactId="EBI-2350265">
        <id>Q7L2Z9</id>
        <label>CENPQ</label>
    </interactant>
    <organismsDiffer>false</organismsDiffer>
    <experiments>3</experiments>
</comment>
<comment type="interaction">
    <interactant intactId="EBI-1046690">
        <id>O60749</id>
    </interactant>
    <interactant intactId="EBI-10968534">
        <id>P50570-2</id>
        <label>DNM2</label>
    </interactant>
    <organismsDiffer>false</organismsDiffer>
    <experiments>3</experiments>
</comment>
<comment type="interaction">
    <interactant intactId="EBI-1046690">
        <id>O60749</id>
    </interactant>
    <interactant intactId="EBI-1111248">
        <id>Q96RU3</id>
        <label>FNBP1</label>
    </interactant>
    <organismsDiffer>false</organismsDiffer>
    <experiments>4</experiments>
</comment>
<comment type="interaction">
    <interactant intactId="EBI-1046690">
        <id>O60749</id>
    </interactant>
    <interactant intactId="EBI-11110431">
        <id>Q8TB36</id>
        <label>GDAP1</label>
    </interactant>
    <organismsDiffer>false</organismsDiffer>
    <experiments>3</experiments>
</comment>
<comment type="interaction">
    <interactant intactId="EBI-1046690">
        <id>O60749</id>
    </interactant>
    <interactant intactId="EBI-466029">
        <id>P42858</id>
        <label>HTT</label>
    </interactant>
    <organismsDiffer>false</organismsDiffer>
    <experiments>6</experiments>
</comment>
<comment type="interaction">
    <interactant intactId="EBI-1046690">
        <id>O60749</id>
    </interactant>
    <interactant intactId="EBI-3923617">
        <id>Q9H2K0</id>
        <label>MTIF3</label>
    </interactant>
    <organismsDiffer>false</organismsDiffer>
    <experiments>3</experiments>
</comment>
<comment type="interaction">
    <interactant intactId="EBI-1046690">
        <id>O60749</id>
    </interactant>
    <interactant intactId="EBI-725795">
        <id>O60664</id>
        <label>PLIN3</label>
    </interactant>
    <organismsDiffer>false</organismsDiffer>
    <experiments>3</experiments>
</comment>
<comment type="interaction">
    <interactant intactId="EBI-1046690">
        <id>O60749</id>
    </interactant>
    <interactant intactId="EBI-1045072">
        <id>Q96T60</id>
        <label>PNKP</label>
    </interactant>
    <organismsDiffer>false</organismsDiffer>
    <experiments>3</experiments>
</comment>
<comment type="interaction">
    <interactant intactId="EBI-1046690">
        <id>O60749</id>
    </interactant>
    <interactant intactId="EBI-395421">
        <id>Q16637</id>
        <label>SMN2</label>
    </interactant>
    <organismsDiffer>false</organismsDiffer>
    <experiments>3</experiments>
</comment>
<comment type="interaction">
    <interactant intactId="EBI-1046690">
        <id>O60749</id>
    </interactant>
    <interactant intactId="EBI-2822329">
        <id>Q13596</id>
        <label>SNX1</label>
    </interactant>
    <organismsDiffer>false</organismsDiffer>
    <experiments>6</experiments>
</comment>
<comment type="interaction">
    <interactant intactId="EBI-1046690">
        <id>O60749</id>
    </interactant>
    <interactant intactId="EBI-8099743">
        <id>Q86XE0</id>
        <label>SNX32</label>
    </interactant>
    <organismsDiffer>false</organismsDiffer>
    <experiments>6</experiments>
</comment>
<comment type="interaction">
    <interactant intactId="EBI-1046690">
        <id>O60749</id>
    </interactant>
    <interactant intactId="EBI-715760">
        <id>Q9Y5X3</id>
        <label>SNX5</label>
    </interactant>
    <organismsDiffer>false</organismsDiffer>
    <experiments>3</experiments>
</comment>
<comment type="interaction">
    <interactant intactId="EBI-1046690">
        <id>O60749</id>
    </interactant>
    <interactant intactId="EBI-949294">
        <id>Q9UNH7</id>
        <label>SNX6</label>
    </interactant>
    <organismsDiffer>false</organismsDiffer>
    <experiments>10</experiments>
</comment>
<comment type="interaction">
    <interactant intactId="EBI-1046690">
        <id>O60749</id>
    </interactant>
    <interactant intactId="EBI-11528917">
        <id>Q8WW34-2</id>
        <label>TMEM239</label>
    </interactant>
    <organismsDiffer>false</organismsDiffer>
    <experiments>3</experiments>
</comment>
<comment type="interaction">
    <interactant intactId="EBI-1046690">
        <id>O60749</id>
    </interactant>
    <interactant intactId="EBI-2799703">
        <id>O95070</id>
        <label>YIF1A</label>
    </interactant>
    <organismsDiffer>false</organismsDiffer>
    <experiments>3</experiments>
</comment>
<comment type="subcellular location">
    <subcellularLocation>
        <location evidence="8 9">Early endosome membrane</location>
        <topology evidence="8 9">Peripheral membrane protein</topology>
        <orientation evidence="8 9">Cytoplasmic side</orientation>
    </subcellularLocation>
    <subcellularLocation>
        <location evidence="14">Cell projection</location>
        <location evidence="14">Lamellipodium</location>
    </subcellularLocation>
    <text evidence="10 14">Colocalized with SORT1 to tubular endosomal membrane structures called endosome-to-TGN transport carriers (ETCs) which are budding from early endosome vacuoles just before maturing into late endosome vacuoles (PubMed:18088323). Colocalized with F-actin at the leading edge of lamellipodia in cells in a KALRN-dependent manner (PubMed:20604901).</text>
</comment>
<comment type="alternative products">
    <event type="alternative splicing"/>
    <isoform>
        <id>O60749-1</id>
        <name>1</name>
        <sequence type="displayed"/>
    </isoform>
    <isoform>
        <id>O60749-2</id>
        <name>2</name>
        <sequence type="described" ref="VSP_054785"/>
    </isoform>
</comment>
<comment type="domain">
    <text evidence="20 21">The BAR domain is able to sense membrane curvature upon dimerization. Membrane remodeling seems to implicate insertion of a N-terminal amphipathic helix (AH) in the membrane (Probable).</text>
</comment>
<comment type="similarity">
    <text evidence="23">Belongs to the sorting nexin family.</text>
</comment>
<accession>O60749</accession>
<accession>B3KN44</accession>
<accession>B4DEK4</accession>
<accession>B7Z408</accession>
<accession>O43650</accession>
<accession>P82862</accession>
<accession>Q53XK8</accession>
<accession>Q597H6</accession>
<accession>Q9BTS8</accession>
<name>SNX2_HUMAN</name>
<reference key="1">
    <citation type="submission" date="1998-01" db="EMBL/GenBank/DDBJ databases">
        <authorList>
            <person name="Kurten R.C."/>
            <person name="Leychkis Y."/>
            <person name="Wiley H.S."/>
            <person name="Gill G.N."/>
        </authorList>
    </citation>
    <scope>NUCLEOTIDE SEQUENCE [MRNA] (ISOFORM 1)</scope>
    <source>
        <tissue>Placenta</tissue>
    </source>
</reference>
<reference key="2">
    <citation type="journal article" date="1998" name="Mol. Cell. Biol.">
        <title>Identification of a family of sorting nexin molecules and characterization of their association with receptors.</title>
        <authorList>
            <person name="Haft C.R."/>
            <person name="de la Luz Sierra M."/>
            <person name="Barr V.A."/>
            <person name="Haft D.H."/>
            <person name="Taylor S.I."/>
        </authorList>
    </citation>
    <scope>NUCLEOTIDE SEQUENCE [MRNA] (ISOFORM 1)</scope>
    <scope>SUBUNIT</scope>
</reference>
<reference key="3">
    <citation type="submission" date="2003-04" db="EMBL/GenBank/DDBJ databases">
        <title>Identification of a human transforming gene.</title>
        <authorList>
            <person name="Kim J.W."/>
        </authorList>
    </citation>
    <scope>NUCLEOTIDE SEQUENCE [LARGE SCALE MRNA] (ISOFORM 1)</scope>
</reference>
<reference key="4">
    <citation type="submission" date="2003-08" db="EMBL/GenBank/DDBJ databases">
        <title>Cloning of human full-length CDSs in BD Creator(TM) system donor vector.</title>
        <authorList>
            <person name="Kalnine N."/>
            <person name="Chen X."/>
            <person name="Rolfs A."/>
            <person name="Halleck A."/>
            <person name="Hines L."/>
            <person name="Eisenstein S."/>
            <person name="Koundinya M."/>
            <person name="Raphael J."/>
            <person name="Moreira D."/>
            <person name="Kelley T."/>
            <person name="LaBaer J."/>
            <person name="Lin Y."/>
            <person name="Phelan M."/>
            <person name="Farmer A."/>
        </authorList>
    </citation>
    <scope>NUCLEOTIDE SEQUENCE [LARGE SCALE MRNA] (ISOFORM 1)</scope>
</reference>
<reference key="5">
    <citation type="journal article" date="2004" name="Nat. Genet.">
        <title>Complete sequencing and characterization of 21,243 full-length human cDNAs.</title>
        <authorList>
            <person name="Ota T."/>
            <person name="Suzuki Y."/>
            <person name="Nishikawa T."/>
            <person name="Otsuki T."/>
            <person name="Sugiyama T."/>
            <person name="Irie R."/>
            <person name="Wakamatsu A."/>
            <person name="Hayashi K."/>
            <person name="Sato H."/>
            <person name="Nagai K."/>
            <person name="Kimura K."/>
            <person name="Makita H."/>
            <person name="Sekine M."/>
            <person name="Obayashi M."/>
            <person name="Nishi T."/>
            <person name="Shibahara T."/>
            <person name="Tanaka T."/>
            <person name="Ishii S."/>
            <person name="Yamamoto J."/>
            <person name="Saito K."/>
            <person name="Kawai Y."/>
            <person name="Isono Y."/>
            <person name="Nakamura Y."/>
            <person name="Nagahari K."/>
            <person name="Murakami K."/>
            <person name="Yasuda T."/>
            <person name="Iwayanagi T."/>
            <person name="Wagatsuma M."/>
            <person name="Shiratori A."/>
            <person name="Sudo H."/>
            <person name="Hosoiri T."/>
            <person name="Kaku Y."/>
            <person name="Kodaira H."/>
            <person name="Kondo H."/>
            <person name="Sugawara M."/>
            <person name="Takahashi M."/>
            <person name="Kanda K."/>
            <person name="Yokoi T."/>
            <person name="Furuya T."/>
            <person name="Kikkawa E."/>
            <person name="Omura Y."/>
            <person name="Abe K."/>
            <person name="Kamihara K."/>
            <person name="Katsuta N."/>
            <person name="Sato K."/>
            <person name="Tanikawa M."/>
            <person name="Yamazaki M."/>
            <person name="Ninomiya K."/>
            <person name="Ishibashi T."/>
            <person name="Yamashita H."/>
            <person name="Murakawa K."/>
            <person name="Fujimori K."/>
            <person name="Tanai H."/>
            <person name="Kimata M."/>
            <person name="Watanabe M."/>
            <person name="Hiraoka S."/>
            <person name="Chiba Y."/>
            <person name="Ishida S."/>
            <person name="Ono Y."/>
            <person name="Takiguchi S."/>
            <person name="Watanabe S."/>
            <person name="Yosida M."/>
            <person name="Hotuta T."/>
            <person name="Kusano J."/>
            <person name="Kanehori K."/>
            <person name="Takahashi-Fujii A."/>
            <person name="Hara H."/>
            <person name="Tanase T.-O."/>
            <person name="Nomura Y."/>
            <person name="Togiya S."/>
            <person name="Komai F."/>
            <person name="Hara R."/>
            <person name="Takeuchi K."/>
            <person name="Arita M."/>
            <person name="Imose N."/>
            <person name="Musashino K."/>
            <person name="Yuuki H."/>
            <person name="Oshima A."/>
            <person name="Sasaki N."/>
            <person name="Aotsuka S."/>
            <person name="Yoshikawa Y."/>
            <person name="Matsunawa H."/>
            <person name="Ichihara T."/>
            <person name="Shiohata N."/>
            <person name="Sano S."/>
            <person name="Moriya S."/>
            <person name="Momiyama H."/>
            <person name="Satoh N."/>
            <person name="Takami S."/>
            <person name="Terashima Y."/>
            <person name="Suzuki O."/>
            <person name="Nakagawa S."/>
            <person name="Senoh A."/>
            <person name="Mizoguchi H."/>
            <person name="Goto Y."/>
            <person name="Shimizu F."/>
            <person name="Wakebe H."/>
            <person name="Hishigaki H."/>
            <person name="Watanabe T."/>
            <person name="Sugiyama A."/>
            <person name="Takemoto M."/>
            <person name="Kawakami B."/>
            <person name="Yamazaki M."/>
            <person name="Watanabe K."/>
            <person name="Kumagai A."/>
            <person name="Itakura S."/>
            <person name="Fukuzumi Y."/>
            <person name="Fujimori Y."/>
            <person name="Komiyama M."/>
            <person name="Tashiro H."/>
            <person name="Tanigami A."/>
            <person name="Fujiwara T."/>
            <person name="Ono T."/>
            <person name="Yamada K."/>
            <person name="Fujii Y."/>
            <person name="Ozaki K."/>
            <person name="Hirao M."/>
            <person name="Ohmori Y."/>
            <person name="Kawabata A."/>
            <person name="Hikiji T."/>
            <person name="Kobatake N."/>
            <person name="Inagaki H."/>
            <person name="Ikema Y."/>
            <person name="Okamoto S."/>
            <person name="Okitani R."/>
            <person name="Kawakami T."/>
            <person name="Noguchi S."/>
            <person name="Itoh T."/>
            <person name="Shigeta K."/>
            <person name="Senba T."/>
            <person name="Matsumura K."/>
            <person name="Nakajima Y."/>
            <person name="Mizuno T."/>
            <person name="Morinaga M."/>
            <person name="Sasaki M."/>
            <person name="Togashi T."/>
            <person name="Oyama M."/>
            <person name="Hata H."/>
            <person name="Watanabe M."/>
            <person name="Komatsu T."/>
            <person name="Mizushima-Sugano J."/>
            <person name="Satoh T."/>
            <person name="Shirai Y."/>
            <person name="Takahashi Y."/>
            <person name="Nakagawa K."/>
            <person name="Okumura K."/>
            <person name="Nagase T."/>
            <person name="Nomura N."/>
            <person name="Kikuchi H."/>
            <person name="Masuho Y."/>
            <person name="Yamashita R."/>
            <person name="Nakai K."/>
            <person name="Yada T."/>
            <person name="Nakamura Y."/>
            <person name="Ohara O."/>
            <person name="Isogai T."/>
            <person name="Sugano S."/>
        </authorList>
    </citation>
    <scope>NUCLEOTIDE SEQUENCE [LARGE SCALE MRNA] (ISOFORMS 1 AND 2)</scope>
    <source>
        <tissue>Cerebellum</tissue>
        <tissue>Colon</tissue>
        <tissue>Placenta</tissue>
    </source>
</reference>
<reference key="6">
    <citation type="journal article" date="2004" name="Nature">
        <title>The DNA sequence and comparative analysis of human chromosome 5.</title>
        <authorList>
            <person name="Schmutz J."/>
            <person name="Martin J."/>
            <person name="Terry A."/>
            <person name="Couronne O."/>
            <person name="Grimwood J."/>
            <person name="Lowry S."/>
            <person name="Gordon L.A."/>
            <person name="Scott D."/>
            <person name="Xie G."/>
            <person name="Huang W."/>
            <person name="Hellsten U."/>
            <person name="Tran-Gyamfi M."/>
            <person name="She X."/>
            <person name="Prabhakar S."/>
            <person name="Aerts A."/>
            <person name="Altherr M."/>
            <person name="Bajorek E."/>
            <person name="Black S."/>
            <person name="Branscomb E."/>
            <person name="Caoile C."/>
            <person name="Challacombe J.F."/>
            <person name="Chan Y.M."/>
            <person name="Denys M."/>
            <person name="Detter J.C."/>
            <person name="Escobar J."/>
            <person name="Flowers D."/>
            <person name="Fotopulos D."/>
            <person name="Glavina T."/>
            <person name="Gomez M."/>
            <person name="Gonzales E."/>
            <person name="Goodstein D."/>
            <person name="Grigoriev I."/>
            <person name="Groza M."/>
            <person name="Hammon N."/>
            <person name="Hawkins T."/>
            <person name="Haydu L."/>
            <person name="Israni S."/>
            <person name="Jett J."/>
            <person name="Kadner K."/>
            <person name="Kimball H."/>
            <person name="Kobayashi A."/>
            <person name="Lopez F."/>
            <person name="Lou Y."/>
            <person name="Martinez D."/>
            <person name="Medina C."/>
            <person name="Morgan J."/>
            <person name="Nandkeshwar R."/>
            <person name="Noonan J.P."/>
            <person name="Pitluck S."/>
            <person name="Pollard M."/>
            <person name="Predki P."/>
            <person name="Priest J."/>
            <person name="Ramirez L."/>
            <person name="Retterer J."/>
            <person name="Rodriguez A."/>
            <person name="Rogers S."/>
            <person name="Salamov A."/>
            <person name="Salazar A."/>
            <person name="Thayer N."/>
            <person name="Tice H."/>
            <person name="Tsai M."/>
            <person name="Ustaszewska A."/>
            <person name="Vo N."/>
            <person name="Wheeler J."/>
            <person name="Wu K."/>
            <person name="Yang J."/>
            <person name="Dickson M."/>
            <person name="Cheng J.-F."/>
            <person name="Eichler E.E."/>
            <person name="Olsen A."/>
            <person name="Pennacchio L.A."/>
            <person name="Rokhsar D.S."/>
            <person name="Richardson P."/>
            <person name="Lucas S.M."/>
            <person name="Myers R.M."/>
            <person name="Rubin E.M."/>
        </authorList>
    </citation>
    <scope>NUCLEOTIDE SEQUENCE [LARGE SCALE GENOMIC DNA]</scope>
</reference>
<reference key="7">
    <citation type="submission" date="2005-09" db="EMBL/GenBank/DDBJ databases">
        <authorList>
            <person name="Mural R.J."/>
            <person name="Istrail S."/>
            <person name="Sutton G.G."/>
            <person name="Florea L."/>
            <person name="Halpern A.L."/>
            <person name="Mobarry C.M."/>
            <person name="Lippert R."/>
            <person name="Walenz B."/>
            <person name="Shatkay H."/>
            <person name="Dew I."/>
            <person name="Miller J.R."/>
            <person name="Flanigan M.J."/>
            <person name="Edwards N.J."/>
            <person name="Bolanos R."/>
            <person name="Fasulo D."/>
            <person name="Halldorsson B.V."/>
            <person name="Hannenhalli S."/>
            <person name="Turner R."/>
            <person name="Yooseph S."/>
            <person name="Lu F."/>
            <person name="Nusskern D.R."/>
            <person name="Shue B.C."/>
            <person name="Zheng X.H."/>
            <person name="Zhong F."/>
            <person name="Delcher A.L."/>
            <person name="Huson D.H."/>
            <person name="Kravitz S.A."/>
            <person name="Mouchard L."/>
            <person name="Reinert K."/>
            <person name="Remington K.A."/>
            <person name="Clark A.G."/>
            <person name="Waterman M.S."/>
            <person name="Eichler E.E."/>
            <person name="Adams M.D."/>
            <person name="Hunkapiller M.W."/>
            <person name="Myers E.W."/>
            <person name="Venter J.C."/>
        </authorList>
    </citation>
    <scope>NUCLEOTIDE SEQUENCE [LARGE SCALE GENOMIC DNA]</scope>
</reference>
<reference key="8">
    <citation type="journal article" date="2004" name="Genome Res.">
        <title>The status, quality, and expansion of the NIH full-length cDNA project: the Mammalian Gene Collection (MGC).</title>
        <authorList>
            <consortium name="The MGC Project Team"/>
        </authorList>
    </citation>
    <scope>NUCLEOTIDE SEQUENCE [LARGE SCALE MRNA] (ISOFORM 1)</scope>
    <source>
        <tissue>Placenta</tissue>
    </source>
</reference>
<reference key="9">
    <citation type="journal article" date="2000" name="Mol. Biol. Cell">
        <title>Human orthologs of yeast vacuolar protein sorting proteins Vps26, 29, and 35: assembly into multimeric complexes.</title>
        <authorList>
            <person name="Renfrew Haft C."/>
            <person name="de la Luz Sierra M."/>
            <person name="Bafford R."/>
            <person name="Lesniak M.A."/>
            <person name="Barr V.A."/>
            <person name="Taylor S.I."/>
        </authorList>
    </citation>
    <scope>SUBUNIT</scope>
</reference>
<reference key="10">
    <citation type="journal article" date="2001" name="Proc. Natl. Acad. Sci. U.S.A.">
        <title>The human formin-binding protein 17 (FBP17) interacts with sorting nexin, SNX2, and is an MLL-fusion partner in acute myelogeneous leukemia.</title>
        <authorList>
            <person name="Fuchs U."/>
            <person name="Rehkamp G.F."/>
            <person name="Haas O.A."/>
            <person name="Slany R."/>
            <person name="Koenig M."/>
            <person name="Bojesen S."/>
            <person name="Bohle R.M."/>
            <person name="Damm-Welk C."/>
            <person name="Ludwig W.-D."/>
            <person name="Harbott J."/>
            <person name="Borkhardt A."/>
        </authorList>
    </citation>
    <scope>INTERACTION WITH FNBP1</scope>
</reference>
<reference key="11">
    <citation type="journal article" date="2003" name="FEBS Lett.">
        <title>The formin-binding protein 17, FBP17, binds via a TNKS binding motif to tankyrase, a protein involved in telomere maintenance.</title>
        <authorList>
            <person name="Fuchs U."/>
            <person name="Rehkamp G.F."/>
            <person name="Slany R."/>
            <person name="Follo M."/>
            <person name="Borkhardt A."/>
        </authorList>
    </citation>
    <scope>INTERACTION WITH FNBP1</scope>
</reference>
<reference key="12">
    <citation type="journal article" date="2005" name="J. Cell Sci.">
        <title>Sorting nexin-2 is associated with tubular elements of the early endosome, but is not essential for retromer-mediated endosome-to-TGN transport.</title>
        <authorList>
            <person name="Carlton J.G."/>
            <person name="Bujny M.V."/>
            <person name="Peter B.J."/>
            <person name="Oorschot V.M."/>
            <person name="Rutherford A."/>
            <person name="Arkell R.S."/>
            <person name="Klumperman J."/>
            <person name="McMahon H.T."/>
            <person name="Cullen P.J."/>
        </authorList>
    </citation>
    <scope>FUNCTION</scope>
    <scope>MUTAGENESIS OF LYS-211</scope>
    <scope>SUBCELLULAR LOCATION</scope>
</reference>
<reference key="13">
    <citation type="journal article" date="2006" name="Nat. Biotechnol.">
        <title>A probability-based approach for high-throughput protein phosphorylation analysis and site localization.</title>
        <authorList>
            <person name="Beausoleil S.A."/>
            <person name="Villen J."/>
            <person name="Gerber S.A."/>
            <person name="Rush J."/>
            <person name="Gygi S.P."/>
        </authorList>
    </citation>
    <scope>PHOSPHORYLATION [LARGE SCALE ANALYSIS] AT SER-277</scope>
    <scope>IDENTIFICATION BY MASS SPECTROMETRY [LARGE SCALE ANALYSIS]</scope>
    <source>
        <tissue>Cervix carcinoma</tissue>
    </source>
</reference>
<reference key="14">
    <citation type="journal article" date="2007" name="Mol. Cell. Biol.">
        <title>Interchangeable but essential functions of SNX1 and SNX2 in the association of retromer with endosomes and the trafficking of mannose 6-phosphate receptors.</title>
        <authorList>
            <person name="Rojas R."/>
            <person name="Kametaka S."/>
            <person name="Haft C.R."/>
            <person name="Bonifacino J.S."/>
        </authorList>
    </citation>
    <scope>FUNCTION</scope>
    <scope>SUBCELLULAR LOCATION</scope>
    <scope>SUBUNIT</scope>
</reference>
<reference key="15">
    <citation type="journal article" date="2008" name="Proc. Natl. Acad. Sci. U.S.A.">
        <title>A quantitative atlas of mitotic phosphorylation.</title>
        <authorList>
            <person name="Dephoure N."/>
            <person name="Zhou C."/>
            <person name="Villen J."/>
            <person name="Beausoleil S.A."/>
            <person name="Bakalarski C.E."/>
            <person name="Elledge S.J."/>
            <person name="Gygi S.P."/>
        </authorList>
    </citation>
    <scope>PHOSPHORYLATION [LARGE SCALE ANALYSIS] AT SER-119 AND SER-185</scope>
    <scope>IDENTIFICATION BY MASS SPECTROMETRY [LARGE SCALE ANALYSIS]</scope>
    <source>
        <tissue>Cervix carcinoma</tissue>
    </source>
</reference>
<reference key="16">
    <citation type="journal article" date="2008" name="Traffic">
        <title>SNX1 defines an early endosomal recycling exit for sortilin and mannose 6-phosphate receptors.</title>
        <authorList>
            <person name="Mari M."/>
            <person name="Bujny M.V."/>
            <person name="Zeuschner D."/>
            <person name="Geerts W.J."/>
            <person name="Griffith J."/>
            <person name="Petersen C.M."/>
            <person name="Cullen P.J."/>
            <person name="Klumperman J."/>
            <person name="Geuze H.J."/>
        </authorList>
    </citation>
    <scope>SUBCELLULAR LOCATION</scope>
</reference>
<reference key="17">
    <citation type="journal article" date="2009" name="Cell Res.">
        <title>The retromer component SNX6 interacts with dynactin p150(Glued) and mediates endosome-to-TGN transport.</title>
        <authorList>
            <person name="Hong Z."/>
            <person name="Yang Y."/>
            <person name="Zhang C."/>
            <person name="Niu Y."/>
            <person name="Li K."/>
            <person name="Zhao X."/>
            <person name="Liu J.J."/>
        </authorList>
    </citation>
    <scope>INTERACTION WITH SNX6</scope>
</reference>
<reference key="18">
    <citation type="journal article" date="2009" name="Dev. Cell">
        <title>The retromer coat complex coordinates endosomal sorting and dynein-mediated transport, with carrier recognition by the trans-Golgi network.</title>
        <authorList>
            <person name="Wassmer T."/>
            <person name="Attar N."/>
            <person name="Harterink M."/>
            <person name="van Weering J.R."/>
            <person name="Traer C.J."/>
            <person name="Oakley J."/>
            <person name="Goud B."/>
            <person name="Stephens D.J."/>
            <person name="Verkade P."/>
            <person name="Korswagen H.C."/>
            <person name="Cullen P.J."/>
        </authorList>
    </citation>
    <scope>INTERACTION WITH SNX5; SNX6; VPS26A; VPS29 AND VPS35</scope>
</reference>
<reference key="19">
    <citation type="journal article" date="2009" name="EMBO J.">
        <title>Amphipathic motifs in BAR domains are essential for membrane curvature sensing.</title>
        <authorList>
            <person name="Bhatia V.K."/>
            <person name="Madsen K.L."/>
            <person name="Bolinger P.Y."/>
            <person name="Kunding A."/>
            <person name="Hedegaard P."/>
            <person name="Gether U."/>
            <person name="Stamou D."/>
        </authorList>
    </citation>
    <scope>DOMAIN</scope>
</reference>
<reference key="20">
    <citation type="journal article" date="2009" name="Sci. Signal.">
        <title>Quantitative phosphoproteomic analysis of T cell receptor signaling reveals system-wide modulation of protein-protein interactions.</title>
        <authorList>
            <person name="Mayya V."/>
            <person name="Lundgren D.H."/>
            <person name="Hwang S.-I."/>
            <person name="Rezaul K."/>
            <person name="Wu L."/>
            <person name="Eng J.K."/>
            <person name="Rodionov V."/>
            <person name="Han D.K."/>
        </authorList>
    </citation>
    <scope>IDENTIFICATION BY MASS SPECTROMETRY [LARGE SCALE ANALYSIS]</scope>
    <source>
        <tissue>Leukemic T-cell</tissue>
    </source>
</reference>
<reference key="21">
    <citation type="journal article" date="2009" name="Science">
        <title>Lysine acetylation targets protein complexes and co-regulates major cellular functions.</title>
        <authorList>
            <person name="Choudhary C."/>
            <person name="Kumar C."/>
            <person name="Gnad F."/>
            <person name="Nielsen M.L."/>
            <person name="Rehman M."/>
            <person name="Walther T.C."/>
            <person name="Olsen J.V."/>
            <person name="Mann M."/>
        </authorList>
    </citation>
    <scope>ACETYLATION [LARGE SCALE ANALYSIS] AT LYS-469</scope>
    <scope>IDENTIFICATION BY MASS SPECTROMETRY [LARGE SCALE ANALYSIS]</scope>
</reference>
<reference key="22">
    <citation type="journal article" date="2010" name="Eur. J. Cell Biol.">
        <title>Identification of different itineraries and retromer components for endosome-to-Golgi transport of TGN38 and Shiga toxin.</title>
        <authorList>
            <person name="Lieu Z.Z."/>
            <person name="Gleeson P.A."/>
        </authorList>
    </citation>
    <scope>FUNCTION</scope>
</reference>
<reference key="23">
    <citation type="journal article" date="2010" name="Sci. Signal.">
        <title>Quantitative phosphoproteomics reveals widespread full phosphorylation site occupancy during mitosis.</title>
        <authorList>
            <person name="Olsen J.V."/>
            <person name="Vermeulen M."/>
            <person name="Santamaria A."/>
            <person name="Kumar C."/>
            <person name="Miller M.L."/>
            <person name="Jensen L.J."/>
            <person name="Gnad F."/>
            <person name="Cox J."/>
            <person name="Jensen T.S."/>
            <person name="Nigg E.A."/>
            <person name="Brunak S."/>
            <person name="Mann M."/>
        </authorList>
    </citation>
    <scope>PHOSPHORYLATION [LARGE SCALE ANALYSIS] AT SER-277</scope>
    <scope>IDENTIFICATION BY MASS SPECTROMETRY [LARGE SCALE ANALYSIS]</scope>
    <source>
        <tissue>Cervix carcinoma</tissue>
    </source>
</reference>
<reference key="24">
    <citation type="journal article" date="2010" name="Traffic">
        <title>A novel, retromer-independent role for sorting nexins 1 and 2 in RhoG-dependent membrane remodeling.</title>
        <authorList>
            <person name="Prosser D.C."/>
            <person name="Tran D."/>
            <person name="Schooley A."/>
            <person name="Wendland B."/>
            <person name="Ngsee J.K."/>
        </authorList>
    </citation>
    <scope>FUNCTION</scope>
    <scope>INTERACTION WITH KALRN AND RHOG</scope>
    <scope>SUBCELLULAR LOCATION</scope>
    <scope>MUTAGENESIS OF 182-ARG--PHE-184; LYS-426 AND ARG-428</scope>
</reference>
<reference key="25">
    <citation type="journal article" date="2011" name="BMC Syst. Biol.">
        <title>Initial characterization of the human central proteome.</title>
        <authorList>
            <person name="Burkard T.R."/>
            <person name="Planyavsky M."/>
            <person name="Kaupe I."/>
            <person name="Breitwieser F.P."/>
            <person name="Buerckstuemmer T."/>
            <person name="Bennett K.L."/>
            <person name="Superti-Furga G."/>
            <person name="Colinge J."/>
        </authorList>
    </citation>
    <scope>IDENTIFICATION BY MASS SPECTROMETRY [LARGE SCALE ANALYSIS]</scope>
</reference>
<reference key="26">
    <citation type="journal article" date="2011" name="Sci. Signal.">
        <title>System-wide temporal characterization of the proteome and phosphoproteome of human embryonic stem cell differentiation.</title>
        <authorList>
            <person name="Rigbolt K.T."/>
            <person name="Prokhorova T.A."/>
            <person name="Akimov V."/>
            <person name="Henningsen J."/>
            <person name="Johansen P.T."/>
            <person name="Kratchmarova I."/>
            <person name="Kassem M."/>
            <person name="Mann M."/>
            <person name="Olsen J.V."/>
            <person name="Blagoev B."/>
        </authorList>
    </citation>
    <scope>IDENTIFICATION BY MASS SPECTROMETRY [LARGE SCALE ANALYSIS]</scope>
</reference>
<reference key="27">
    <citation type="journal article" date="2012" name="EMBO J.">
        <title>Molecular basis for SNX-BAR-mediated assembly of distinct endosomal sorting tubules.</title>
        <authorList>
            <person name="van Weering J.R."/>
            <person name="Sessions R.B."/>
            <person name="Traer C.J."/>
            <person name="Kloer D.P."/>
            <person name="Bhatia V.K."/>
            <person name="Stamou D."/>
            <person name="Carlsson S.R."/>
            <person name="Hurley J.H."/>
            <person name="Cullen P.J."/>
        </authorList>
    </citation>
    <scope>FUNCTION</scope>
    <scope>INTERACTION WITH SNX5; SNX6 AND SNX32</scope>
    <scope>SELF-ASSOCIATION</scope>
    <scope>DOMAIN</scope>
</reference>
<reference key="28">
    <citation type="journal article" date="2013" name="J. Proteome Res.">
        <title>Toward a comprehensive characterization of a human cancer cell phosphoproteome.</title>
        <authorList>
            <person name="Zhou H."/>
            <person name="Di Palma S."/>
            <person name="Preisinger C."/>
            <person name="Peng M."/>
            <person name="Polat A.N."/>
            <person name="Heck A.J."/>
            <person name="Mohammed S."/>
        </authorList>
    </citation>
    <scope>PHOSPHORYLATION [LARGE SCALE ANALYSIS] AT SER-117; SER-119; SER-185 AND SER-277</scope>
    <scope>IDENTIFICATION BY MASS SPECTROMETRY [LARGE SCALE ANALYSIS]</scope>
    <source>
        <tissue>Cervix carcinoma</tissue>
        <tissue>Erythroleukemia</tissue>
    </source>
</reference>
<reference key="29">
    <citation type="journal article" date="2014" name="J. Proteomics">
        <title>An enzyme assisted RP-RPLC approach for in-depth analysis of human liver phosphoproteome.</title>
        <authorList>
            <person name="Bian Y."/>
            <person name="Song C."/>
            <person name="Cheng K."/>
            <person name="Dong M."/>
            <person name="Wang F."/>
            <person name="Huang J."/>
            <person name="Sun D."/>
            <person name="Wang L."/>
            <person name="Ye M."/>
            <person name="Zou H."/>
        </authorList>
    </citation>
    <scope>PHOSPHORYLATION [LARGE SCALE ANALYSIS] AT THR-101; THR-104; SER-185 AND SER-277</scope>
    <scope>IDENTIFICATION BY MASS SPECTROMETRY [LARGE SCALE ANALYSIS]</scope>
    <source>
        <tissue>Liver</tissue>
    </source>
</reference>
<reference key="30">
    <citation type="journal article" date="2015" name="Proteomics">
        <title>N-terminome analysis of the human mitochondrial proteome.</title>
        <authorList>
            <person name="Vaca Jacome A.S."/>
            <person name="Rabilloud T."/>
            <person name="Schaeffer-Reiss C."/>
            <person name="Rompais M."/>
            <person name="Ayoub D."/>
            <person name="Lane L."/>
            <person name="Bairoch A."/>
            <person name="Van Dorsselaer A."/>
            <person name="Carapito C."/>
        </authorList>
    </citation>
    <scope>IDENTIFICATION BY MASS SPECTROMETRY [LARGE SCALE ANALYSIS]</scope>
</reference>
<evidence type="ECO:0000250" key="1">
    <source>
        <dbReference type="UniProtKB" id="Q13596"/>
    </source>
</evidence>
<evidence type="ECO:0000250" key="2">
    <source>
        <dbReference type="UniProtKB" id="Q96L94"/>
    </source>
</evidence>
<evidence type="ECO:0000250" key="3">
    <source>
        <dbReference type="UniProtKB" id="Q9CWK8"/>
    </source>
</evidence>
<evidence type="ECO:0000255" key="4">
    <source>
        <dbReference type="PROSITE-ProRule" id="PRU00147"/>
    </source>
</evidence>
<evidence type="ECO:0000256" key="5">
    <source>
        <dbReference type="SAM" id="MobiDB-lite"/>
    </source>
</evidence>
<evidence type="ECO:0000269" key="6">
    <source>
    </source>
</evidence>
<evidence type="ECO:0000269" key="7">
    <source>
    </source>
</evidence>
<evidence type="ECO:0000269" key="8">
    <source>
    </source>
</evidence>
<evidence type="ECO:0000269" key="9">
    <source>
    </source>
</evidence>
<evidence type="ECO:0000269" key="10">
    <source>
    </source>
</evidence>
<evidence type="ECO:0000269" key="11">
    <source>
    </source>
</evidence>
<evidence type="ECO:0000269" key="12">
    <source>
    </source>
</evidence>
<evidence type="ECO:0000269" key="13">
    <source>
    </source>
</evidence>
<evidence type="ECO:0000269" key="14">
    <source>
    </source>
</evidence>
<evidence type="ECO:0000269" key="15">
    <source>
    </source>
</evidence>
<evidence type="ECO:0000303" key="16">
    <source>
    </source>
</evidence>
<evidence type="ECO:0000303" key="17">
    <source>
    </source>
</evidence>
<evidence type="ECO:0000303" key="18">
    <source>
    </source>
</evidence>
<evidence type="ECO:0000303" key="19">
    <source>
    </source>
</evidence>
<evidence type="ECO:0000303" key="20">
    <source>
    </source>
</evidence>
<evidence type="ECO:0000303" key="21">
    <source>
    </source>
</evidence>
<evidence type="ECO:0000303" key="22">
    <source>
    </source>
</evidence>
<evidence type="ECO:0000305" key="23"/>
<evidence type="ECO:0007744" key="24">
    <source>
    </source>
</evidence>
<evidence type="ECO:0007744" key="25">
    <source>
    </source>
</evidence>
<evidence type="ECO:0007744" key="26">
    <source>
    </source>
</evidence>
<evidence type="ECO:0007744" key="27">
    <source>
    </source>
</evidence>
<evidence type="ECO:0007744" key="28">
    <source>
    </source>
</evidence>
<evidence type="ECO:0007744" key="29">
    <source>
    </source>
</evidence>
<feature type="chain" id="PRO_0000213838" description="Sorting nexin-2">
    <location>
        <begin position="1"/>
        <end position="519"/>
    </location>
</feature>
<feature type="domain" description="PX" evidence="4">
    <location>
        <begin position="140"/>
        <end position="269"/>
    </location>
</feature>
<feature type="domain" description="BAR" evidence="1">
    <location>
        <begin position="299"/>
        <end position="519"/>
    </location>
</feature>
<feature type="region of interest" description="Disordered" evidence="5">
    <location>
        <begin position="1"/>
        <end position="104"/>
    </location>
</feature>
<feature type="region of interest" description="Interaction with RhoG" evidence="14">
    <location>
        <begin position="260"/>
        <end position="519"/>
    </location>
</feature>
<feature type="region of interest" description="Membrane-binding amphipathic helix" evidence="20">
    <location>
        <begin position="278"/>
        <end position="295"/>
    </location>
</feature>
<feature type="compositionally biased region" description="Low complexity" evidence="5">
    <location>
        <begin position="27"/>
        <end position="50"/>
    </location>
</feature>
<feature type="compositionally biased region" description="Low complexity" evidence="5">
    <location>
        <begin position="93"/>
        <end position="104"/>
    </location>
</feature>
<feature type="binding site" evidence="2">
    <location>
        <position position="183"/>
    </location>
    <ligand>
        <name>a 1,2-diacyl-sn-glycero-3-phospho-(1D-myo-inositol-3-phosphate)</name>
        <dbReference type="ChEBI" id="CHEBI:58088"/>
    </ligand>
</feature>
<feature type="binding site" evidence="2">
    <location>
        <position position="185"/>
    </location>
    <ligand>
        <name>a 1,2-diacyl-sn-glycero-3-phospho-(1D-myo-inositol-3-phosphate)</name>
        <dbReference type="ChEBI" id="CHEBI:58088"/>
    </ligand>
</feature>
<feature type="binding site" evidence="2">
    <location>
        <position position="211"/>
    </location>
    <ligand>
        <name>a 1,2-diacyl-sn-glycero-3-phospho-(1D-myo-inositol-3-phosphate)</name>
        <dbReference type="ChEBI" id="CHEBI:58088"/>
    </ligand>
</feature>
<feature type="binding site" evidence="2">
    <location>
        <position position="235"/>
    </location>
    <ligand>
        <name>a 1,2-diacyl-sn-glycero-3-phospho-(1D-myo-inositol-3-phosphate)</name>
        <dbReference type="ChEBI" id="CHEBI:58088"/>
    </ligand>
</feature>
<feature type="modified residue" description="Phosphoserine" evidence="3">
    <location>
        <position position="97"/>
    </location>
</feature>
<feature type="modified residue" description="Phosphothreonine" evidence="29">
    <location>
        <position position="101"/>
    </location>
</feature>
<feature type="modified residue" description="Phosphothreonine" evidence="29">
    <location>
        <position position="104"/>
    </location>
</feature>
<feature type="modified residue" description="Phosphoserine" evidence="28">
    <location>
        <position position="117"/>
    </location>
</feature>
<feature type="modified residue" description="Phosphoserine" evidence="25 28">
    <location>
        <position position="119"/>
    </location>
</feature>
<feature type="modified residue" description="Phosphoserine" evidence="25 28 29">
    <location>
        <position position="185"/>
    </location>
</feature>
<feature type="modified residue" description="Phosphoserine" evidence="24 27 28 29">
    <location>
        <position position="277"/>
    </location>
</feature>
<feature type="modified residue" description="N6-acetyllysine" evidence="26">
    <location>
        <position position="469"/>
    </location>
</feature>
<feature type="splice variant" id="VSP_054785" description="In isoform 2." evidence="17">
    <location>
        <begin position="1"/>
        <end position="117"/>
    </location>
</feature>
<feature type="mutagenesis site" description="Decreases KALRN-dependent lamellipodium formation; no effect on interaction with KALRN." evidence="14">
    <original>RRF</original>
    <variation>AAA</variation>
    <location>
        <begin position="182"/>
        <end position="184"/>
    </location>
</feature>
<feature type="mutagenesis site" description="Abolishes phosphatidylinositol phosphate binding. Abolishes endosomal location." evidence="8">
    <original>K</original>
    <variation>A</variation>
    <location>
        <position position="211"/>
    </location>
</feature>
<feature type="mutagenesis site" description="Decreases KALRN-dependent lamellipodium formation; no effect on interaction with KALRN; when associated with A-428." evidence="14">
    <original>K</original>
    <variation>A</variation>
    <location>
        <position position="426"/>
    </location>
</feature>
<feature type="mutagenesis site" description="Decreases KALRN-dependent lamellipodium formation; no effect on interaction with KALRN; when associated with A-426." evidence="14">
    <original>R</original>
    <variation>A</variation>
    <location>
        <position position="428"/>
    </location>
</feature>
<feature type="sequence conflict" description="In Ref. 3; AAQ02693." evidence="23" ref="3">
    <original>E</original>
    <variation>A</variation>
    <location>
        <position position="87"/>
    </location>
</feature>
<feature type="sequence conflict" description="In Ref. 5; BAH12394." evidence="23" ref="5">
    <original>V</original>
    <variation>I</variation>
    <location>
        <position position="146"/>
    </location>
</feature>
<feature type="sequence conflict" description="In Ref. 1 and 2." evidence="23" ref="1 2">
    <original>V</original>
    <variation>F</variation>
    <location>
        <position position="331"/>
    </location>
</feature>
<feature type="sequence conflict" description="In Ref. 1 and 2." evidence="23" ref="1 2">
    <original>A</original>
    <variation>S</variation>
    <location>
        <position position="384"/>
    </location>
</feature>
<gene>
    <name type="primary">SNX2</name>
    <name type="ORF">TRG9</name>
</gene>
<dbReference type="EMBL" id="AF065482">
    <property type="protein sequence ID" value="AAC17181.1"/>
    <property type="molecule type" value="mRNA"/>
</dbReference>
<dbReference type="EMBL" id="AF043453">
    <property type="protein sequence ID" value="AAB99852.1"/>
    <property type="molecule type" value="mRNA"/>
</dbReference>
<dbReference type="EMBL" id="AY272044">
    <property type="protein sequence ID" value="AAQ02693.1"/>
    <property type="molecule type" value="mRNA"/>
</dbReference>
<dbReference type="EMBL" id="BT009841">
    <property type="protein sequence ID" value="AAP88843.1"/>
    <property type="molecule type" value="mRNA"/>
</dbReference>
<dbReference type="EMBL" id="AK023581">
    <property type="protein sequence ID" value="BAG51206.1"/>
    <property type="molecule type" value="mRNA"/>
</dbReference>
<dbReference type="EMBL" id="AK293671">
    <property type="protein sequence ID" value="BAG57115.1"/>
    <property type="molecule type" value="mRNA"/>
</dbReference>
<dbReference type="EMBL" id="AK296596">
    <property type="protein sequence ID" value="BAH12394.1"/>
    <property type="molecule type" value="mRNA"/>
</dbReference>
<dbReference type="EMBL" id="AC008669">
    <property type="status" value="NOT_ANNOTATED_CDS"/>
    <property type="molecule type" value="Genomic_DNA"/>
</dbReference>
<dbReference type="EMBL" id="AC093267">
    <property type="status" value="NOT_ANNOTATED_CDS"/>
    <property type="molecule type" value="Genomic_DNA"/>
</dbReference>
<dbReference type="EMBL" id="CH471086">
    <property type="protein sequence ID" value="EAW48884.1"/>
    <property type="molecule type" value="Genomic_DNA"/>
</dbReference>
<dbReference type="EMBL" id="BC003382">
    <property type="protein sequence ID" value="AAH03382.1"/>
    <property type="molecule type" value="mRNA"/>
</dbReference>
<dbReference type="CCDS" id="CCDS34217.1">
    <molecule id="O60749-1"/>
</dbReference>
<dbReference type="CCDS" id="CCDS64234.1">
    <molecule id="O60749-2"/>
</dbReference>
<dbReference type="RefSeq" id="NP_001265128.1">
    <molecule id="O60749-2"/>
    <property type="nucleotide sequence ID" value="NM_001278199.1"/>
</dbReference>
<dbReference type="RefSeq" id="NP_003091.2">
    <molecule id="O60749-1"/>
    <property type="nucleotide sequence ID" value="NM_003100.3"/>
</dbReference>
<dbReference type="SMR" id="O60749"/>
<dbReference type="BioGRID" id="112526">
    <property type="interactions" value="241"/>
</dbReference>
<dbReference type="ComplexPortal" id="CPX-8838">
    <property type="entry name" value="SNX2-SNX5 sorting nexin complex"/>
</dbReference>
<dbReference type="ComplexPortal" id="CPX-8839">
    <property type="entry name" value="SNX2-SNX6 sorting nexin complex"/>
</dbReference>
<dbReference type="ComplexPortal" id="CPX-8840">
    <property type="entry name" value="SNX2-SNX32 sorting nexin complex"/>
</dbReference>
<dbReference type="CORUM" id="O60749"/>
<dbReference type="FunCoup" id="O60749">
    <property type="interactions" value="3200"/>
</dbReference>
<dbReference type="IntAct" id="O60749">
    <property type="interactions" value="99"/>
</dbReference>
<dbReference type="MINT" id="O60749"/>
<dbReference type="STRING" id="9606.ENSP00000368831"/>
<dbReference type="TCDB" id="3.A.34.1.1">
    <property type="family name" value="the sorting nexins of the escrt complexes (sn-escrt)"/>
</dbReference>
<dbReference type="GlyGen" id="O60749">
    <property type="glycosylation" value="3 sites, 1 O-linked glycan (2 sites)"/>
</dbReference>
<dbReference type="iPTMnet" id="O60749"/>
<dbReference type="MetOSite" id="O60749"/>
<dbReference type="PhosphoSitePlus" id="O60749"/>
<dbReference type="SwissPalm" id="O60749"/>
<dbReference type="BioMuta" id="SNX2"/>
<dbReference type="jPOST" id="O60749"/>
<dbReference type="MassIVE" id="O60749"/>
<dbReference type="PaxDb" id="9606-ENSP00000368831"/>
<dbReference type="PeptideAtlas" id="O60749"/>
<dbReference type="ProteomicsDB" id="3966"/>
<dbReference type="ProteomicsDB" id="49584">
    <molecule id="O60749-1"/>
</dbReference>
<dbReference type="Pumba" id="O60749"/>
<dbReference type="Antibodypedia" id="25631">
    <property type="antibodies" value="183 antibodies from 27 providers"/>
</dbReference>
<dbReference type="DNASU" id="6643"/>
<dbReference type="Ensembl" id="ENST00000379516.7">
    <molecule id="O60749-1"/>
    <property type="protein sequence ID" value="ENSP00000368831.2"/>
    <property type="gene ID" value="ENSG00000205302.7"/>
</dbReference>
<dbReference type="Ensembl" id="ENST00000514949.1">
    <molecule id="O60749-2"/>
    <property type="protein sequence ID" value="ENSP00000421663.1"/>
    <property type="gene ID" value="ENSG00000205302.7"/>
</dbReference>
<dbReference type="GeneID" id="6643"/>
<dbReference type="KEGG" id="hsa:6643"/>
<dbReference type="MANE-Select" id="ENST00000379516.7">
    <property type="protein sequence ID" value="ENSP00000368831.2"/>
    <property type="RefSeq nucleotide sequence ID" value="NM_003100.4"/>
    <property type="RefSeq protein sequence ID" value="NP_003091.2"/>
</dbReference>
<dbReference type="UCSC" id="uc003kte.5">
    <molecule id="O60749-1"/>
    <property type="organism name" value="human"/>
</dbReference>
<dbReference type="AGR" id="HGNC:11173"/>
<dbReference type="CTD" id="6643"/>
<dbReference type="DisGeNET" id="6643"/>
<dbReference type="GeneCards" id="SNX2"/>
<dbReference type="HGNC" id="HGNC:11173">
    <property type="gene designation" value="SNX2"/>
</dbReference>
<dbReference type="HPA" id="ENSG00000205302">
    <property type="expression patterns" value="Low tissue specificity"/>
</dbReference>
<dbReference type="MIM" id="605929">
    <property type="type" value="gene"/>
</dbReference>
<dbReference type="neXtProt" id="NX_O60749"/>
<dbReference type="OpenTargets" id="ENSG00000205302"/>
<dbReference type="PharmGKB" id="PA36012"/>
<dbReference type="VEuPathDB" id="HostDB:ENSG00000205302"/>
<dbReference type="eggNOG" id="KOG2273">
    <property type="taxonomic scope" value="Eukaryota"/>
</dbReference>
<dbReference type="GeneTree" id="ENSGT00940000155798"/>
<dbReference type="HOGENOM" id="CLU_022783_2_1_1"/>
<dbReference type="InParanoid" id="O60749"/>
<dbReference type="OMA" id="LWETFLM"/>
<dbReference type="OrthoDB" id="271164at2759"/>
<dbReference type="PAN-GO" id="O60749">
    <property type="GO annotations" value="4 GO annotations based on evolutionary models"/>
</dbReference>
<dbReference type="PhylomeDB" id="O60749"/>
<dbReference type="TreeFam" id="TF313698"/>
<dbReference type="PathwayCommons" id="O60749"/>
<dbReference type="Reactome" id="R-HSA-432722">
    <property type="pathway name" value="Golgi Associated Vesicle Biogenesis"/>
</dbReference>
<dbReference type="SignaLink" id="O60749"/>
<dbReference type="BioGRID-ORCS" id="6643">
    <property type="hits" value="7 hits in 1158 CRISPR screens"/>
</dbReference>
<dbReference type="CD-CODE" id="FB4E32DD">
    <property type="entry name" value="Presynaptic clusters and postsynaptic densities"/>
</dbReference>
<dbReference type="ChiTaRS" id="SNX2">
    <property type="organism name" value="human"/>
</dbReference>
<dbReference type="GeneWiki" id="SNX2"/>
<dbReference type="GenomeRNAi" id="6643"/>
<dbReference type="Pharos" id="O60749">
    <property type="development level" value="Tbio"/>
</dbReference>
<dbReference type="PRO" id="PR:O60749"/>
<dbReference type="Proteomes" id="UP000005640">
    <property type="component" value="Chromosome 5"/>
</dbReference>
<dbReference type="RNAct" id="O60749">
    <property type="molecule type" value="protein"/>
</dbReference>
<dbReference type="Bgee" id="ENSG00000205302">
    <property type="expression patterns" value="Expressed in monocyte and 205 other cell types or tissues"/>
</dbReference>
<dbReference type="ExpressionAtlas" id="O60749">
    <property type="expression patterns" value="baseline and differential"/>
</dbReference>
<dbReference type="GO" id="GO:0005737">
    <property type="term" value="C:cytoplasm"/>
    <property type="evidence" value="ECO:0000314"/>
    <property type="project" value="HGNC-UCL"/>
</dbReference>
<dbReference type="GO" id="GO:0005829">
    <property type="term" value="C:cytosol"/>
    <property type="evidence" value="ECO:0007669"/>
    <property type="project" value="GOC"/>
</dbReference>
<dbReference type="GO" id="GO:0031901">
    <property type="term" value="C:early endosome membrane"/>
    <property type="evidence" value="ECO:0007669"/>
    <property type="project" value="UniProtKB-SubCell"/>
</dbReference>
<dbReference type="GO" id="GO:0005768">
    <property type="term" value="C:endosome"/>
    <property type="evidence" value="ECO:0000314"/>
    <property type="project" value="HPA"/>
</dbReference>
<dbReference type="GO" id="GO:0010008">
    <property type="term" value="C:endosome membrane"/>
    <property type="evidence" value="ECO:0000314"/>
    <property type="project" value="UniProtKB"/>
</dbReference>
<dbReference type="GO" id="GO:0030027">
    <property type="term" value="C:lamellipodium"/>
    <property type="evidence" value="ECO:0007669"/>
    <property type="project" value="UniProtKB-SubCell"/>
</dbReference>
<dbReference type="GO" id="GO:0005764">
    <property type="term" value="C:lysosome"/>
    <property type="evidence" value="ECO:0000314"/>
    <property type="project" value="HPA"/>
</dbReference>
<dbReference type="GO" id="GO:0016020">
    <property type="term" value="C:membrane"/>
    <property type="evidence" value="ECO:0000314"/>
    <property type="project" value="UniProtKB"/>
</dbReference>
<dbReference type="GO" id="GO:0032991">
    <property type="term" value="C:protein-containing complex"/>
    <property type="evidence" value="ECO:0000314"/>
    <property type="project" value="UniProtKB"/>
</dbReference>
<dbReference type="GO" id="GO:0030904">
    <property type="term" value="C:retromer complex"/>
    <property type="evidence" value="ECO:0000314"/>
    <property type="project" value="UniProtKB"/>
</dbReference>
<dbReference type="GO" id="GO:0030905">
    <property type="term" value="C:retromer, tubulation complex"/>
    <property type="evidence" value="ECO:0000353"/>
    <property type="project" value="ParkinsonsUK-UCL"/>
</dbReference>
<dbReference type="GO" id="GO:0045296">
    <property type="term" value="F:cadherin binding"/>
    <property type="evidence" value="ECO:0007005"/>
    <property type="project" value="BHF-UCL"/>
</dbReference>
<dbReference type="GO" id="GO:0005154">
    <property type="term" value="F:epidermal growth factor receptor binding"/>
    <property type="evidence" value="ECO:0000314"/>
    <property type="project" value="UniProtKB"/>
</dbReference>
<dbReference type="GO" id="GO:0042802">
    <property type="term" value="F:identical protein binding"/>
    <property type="evidence" value="ECO:0000353"/>
    <property type="project" value="UniProtKB"/>
</dbReference>
<dbReference type="GO" id="GO:0005158">
    <property type="term" value="F:insulin receptor binding"/>
    <property type="evidence" value="ECO:0000314"/>
    <property type="project" value="UniProtKB"/>
</dbReference>
<dbReference type="GO" id="GO:1990460">
    <property type="term" value="F:leptin receptor binding"/>
    <property type="evidence" value="ECO:0000314"/>
    <property type="project" value="UniProtKB"/>
</dbReference>
<dbReference type="GO" id="GO:0035091">
    <property type="term" value="F:phosphatidylinositol binding"/>
    <property type="evidence" value="ECO:0000318"/>
    <property type="project" value="GO_Central"/>
</dbReference>
<dbReference type="GO" id="GO:0046982">
    <property type="term" value="F:protein heterodimerization activity"/>
    <property type="evidence" value="ECO:0000353"/>
    <property type="project" value="ParkinsonsUK-UCL"/>
</dbReference>
<dbReference type="GO" id="GO:0042803">
    <property type="term" value="F:protein homodimerization activity"/>
    <property type="evidence" value="ECO:0000353"/>
    <property type="project" value="ParkinsonsUK-UCL"/>
</dbReference>
<dbReference type="GO" id="GO:1990459">
    <property type="term" value="F:transferrin receptor binding"/>
    <property type="evidence" value="ECO:0000314"/>
    <property type="project" value="UniProtKB"/>
</dbReference>
<dbReference type="GO" id="GO:0034498">
    <property type="term" value="P:early endosome to Golgi transport"/>
    <property type="evidence" value="ECO:0000318"/>
    <property type="project" value="GO_Central"/>
</dbReference>
<dbReference type="GO" id="GO:0006886">
    <property type="term" value="P:intracellular protein transport"/>
    <property type="evidence" value="ECO:0007669"/>
    <property type="project" value="InterPro"/>
</dbReference>
<dbReference type="GO" id="GO:0072673">
    <property type="term" value="P:lamellipodium morphogenesis"/>
    <property type="evidence" value="ECO:0000314"/>
    <property type="project" value="UniProtKB"/>
</dbReference>
<dbReference type="GO" id="GO:0042147">
    <property type="term" value="P:retrograde transport, endosome to Golgi"/>
    <property type="evidence" value="ECO:0000315"/>
    <property type="project" value="UniProtKB"/>
</dbReference>
<dbReference type="CDD" id="cd07282">
    <property type="entry name" value="PX_SNX2"/>
    <property type="match status" value="1"/>
</dbReference>
<dbReference type="FunFam" id="1.20.1270.60:FF:000012">
    <property type="entry name" value="Sorting nexin 2"/>
    <property type="match status" value="1"/>
</dbReference>
<dbReference type="FunFam" id="3.30.1520.10:FF:000016">
    <property type="entry name" value="Sorting nexin 2"/>
    <property type="match status" value="1"/>
</dbReference>
<dbReference type="Gene3D" id="1.20.1270.60">
    <property type="entry name" value="Arfaptin homology (AH) domain/BAR domain"/>
    <property type="match status" value="1"/>
</dbReference>
<dbReference type="Gene3D" id="3.30.1520.10">
    <property type="entry name" value="Phox-like domain"/>
    <property type="match status" value="1"/>
</dbReference>
<dbReference type="InterPro" id="IPR027267">
    <property type="entry name" value="AH/BAR_dom_sf"/>
</dbReference>
<dbReference type="InterPro" id="IPR001683">
    <property type="entry name" value="PX_dom"/>
</dbReference>
<dbReference type="InterPro" id="IPR036871">
    <property type="entry name" value="PX_dom_sf"/>
</dbReference>
<dbReference type="InterPro" id="IPR037918">
    <property type="entry name" value="SNX2_PX"/>
</dbReference>
<dbReference type="InterPro" id="IPR005329">
    <property type="entry name" value="Sorting_nexin_N"/>
</dbReference>
<dbReference type="InterPro" id="IPR015404">
    <property type="entry name" value="Vps5_C"/>
</dbReference>
<dbReference type="PANTHER" id="PTHR10555">
    <property type="entry name" value="SORTING NEXIN"/>
    <property type="match status" value="1"/>
</dbReference>
<dbReference type="PANTHER" id="PTHR10555:SF31">
    <property type="entry name" value="SORTING NEXIN-2"/>
    <property type="match status" value="1"/>
</dbReference>
<dbReference type="Pfam" id="PF00787">
    <property type="entry name" value="PX"/>
    <property type="match status" value="1"/>
</dbReference>
<dbReference type="Pfam" id="PF03700">
    <property type="entry name" value="Sorting_nexin"/>
    <property type="match status" value="1"/>
</dbReference>
<dbReference type="Pfam" id="PF09325">
    <property type="entry name" value="Vps5"/>
    <property type="match status" value="1"/>
</dbReference>
<dbReference type="SMART" id="SM00312">
    <property type="entry name" value="PX"/>
    <property type="match status" value="1"/>
</dbReference>
<dbReference type="SUPFAM" id="SSF103657">
    <property type="entry name" value="BAR/IMD domain-like"/>
    <property type="match status" value="1"/>
</dbReference>
<dbReference type="SUPFAM" id="SSF64268">
    <property type="entry name" value="PX domain"/>
    <property type="match status" value="1"/>
</dbReference>
<dbReference type="PROSITE" id="PS50195">
    <property type="entry name" value="PX"/>
    <property type="match status" value="1"/>
</dbReference>
<organism>
    <name type="scientific">Homo sapiens</name>
    <name type="common">Human</name>
    <dbReference type="NCBI Taxonomy" id="9606"/>
    <lineage>
        <taxon>Eukaryota</taxon>
        <taxon>Metazoa</taxon>
        <taxon>Chordata</taxon>
        <taxon>Craniata</taxon>
        <taxon>Vertebrata</taxon>
        <taxon>Euteleostomi</taxon>
        <taxon>Mammalia</taxon>
        <taxon>Eutheria</taxon>
        <taxon>Euarchontoglires</taxon>
        <taxon>Primates</taxon>
        <taxon>Haplorrhini</taxon>
        <taxon>Catarrhini</taxon>
        <taxon>Hominidae</taxon>
        <taxon>Homo</taxon>
    </lineage>
</organism>
<protein>
    <recommendedName>
        <fullName>Sorting nexin-2</fullName>
    </recommendedName>
    <alternativeName>
        <fullName>Transformation-related gene 9 protein</fullName>
        <shortName>TRG-9</shortName>
    </alternativeName>
</protein>